<keyword id="KW-0488">Methylation</keyword>
<keyword id="KW-0687">Ribonucleoprotein</keyword>
<keyword id="KW-0689">Ribosomal protein</keyword>
<keyword id="KW-0694">RNA-binding</keyword>
<keyword id="KW-0699">rRNA-binding</keyword>
<keyword id="KW-0820">tRNA-binding</keyword>
<proteinExistence type="inferred from homology"/>
<evidence type="ECO:0000250" key="1"/>
<evidence type="ECO:0000255" key="2">
    <source>
        <dbReference type="HAMAP-Rule" id="MF_00403"/>
    </source>
</evidence>
<evidence type="ECO:0000305" key="3"/>
<dbReference type="EMBL" id="CP000857">
    <property type="protein sequence ID" value="ACN47601.1"/>
    <property type="molecule type" value="Genomic_DNA"/>
</dbReference>
<dbReference type="RefSeq" id="WP_000246815.1">
    <property type="nucleotide sequence ID" value="NC_012125.1"/>
</dbReference>
<dbReference type="SMR" id="C0Q0C4"/>
<dbReference type="GeneID" id="98390450"/>
<dbReference type="KEGG" id="sei:SPC_3517"/>
<dbReference type="HOGENOM" id="CLU_104295_1_2_6"/>
<dbReference type="Proteomes" id="UP000001599">
    <property type="component" value="Chromosome"/>
</dbReference>
<dbReference type="GO" id="GO:0015935">
    <property type="term" value="C:small ribosomal subunit"/>
    <property type="evidence" value="ECO:0007669"/>
    <property type="project" value="InterPro"/>
</dbReference>
<dbReference type="GO" id="GO:0019843">
    <property type="term" value="F:rRNA binding"/>
    <property type="evidence" value="ECO:0007669"/>
    <property type="project" value="UniProtKB-UniRule"/>
</dbReference>
<dbReference type="GO" id="GO:0003735">
    <property type="term" value="F:structural constituent of ribosome"/>
    <property type="evidence" value="ECO:0007669"/>
    <property type="project" value="InterPro"/>
</dbReference>
<dbReference type="GO" id="GO:0000049">
    <property type="term" value="F:tRNA binding"/>
    <property type="evidence" value="ECO:0007669"/>
    <property type="project" value="UniProtKB-UniRule"/>
</dbReference>
<dbReference type="GO" id="GO:0006412">
    <property type="term" value="P:translation"/>
    <property type="evidence" value="ECO:0007669"/>
    <property type="project" value="UniProtKB-UniRule"/>
</dbReference>
<dbReference type="CDD" id="cd03368">
    <property type="entry name" value="Ribosomal_S12"/>
    <property type="match status" value="1"/>
</dbReference>
<dbReference type="FunFam" id="2.40.50.140:FF:000001">
    <property type="entry name" value="30S ribosomal protein S12"/>
    <property type="match status" value="1"/>
</dbReference>
<dbReference type="Gene3D" id="2.40.50.140">
    <property type="entry name" value="Nucleic acid-binding proteins"/>
    <property type="match status" value="1"/>
</dbReference>
<dbReference type="HAMAP" id="MF_00403_B">
    <property type="entry name" value="Ribosomal_uS12_B"/>
    <property type="match status" value="1"/>
</dbReference>
<dbReference type="InterPro" id="IPR012340">
    <property type="entry name" value="NA-bd_OB-fold"/>
</dbReference>
<dbReference type="InterPro" id="IPR006032">
    <property type="entry name" value="Ribosomal_uS12"/>
</dbReference>
<dbReference type="InterPro" id="IPR005679">
    <property type="entry name" value="Ribosomal_uS12_bac"/>
</dbReference>
<dbReference type="NCBIfam" id="TIGR00981">
    <property type="entry name" value="rpsL_bact"/>
    <property type="match status" value="1"/>
</dbReference>
<dbReference type="PANTHER" id="PTHR11652">
    <property type="entry name" value="30S RIBOSOMAL PROTEIN S12 FAMILY MEMBER"/>
    <property type="match status" value="1"/>
</dbReference>
<dbReference type="Pfam" id="PF00164">
    <property type="entry name" value="Ribosom_S12_S23"/>
    <property type="match status" value="1"/>
</dbReference>
<dbReference type="PIRSF" id="PIRSF002133">
    <property type="entry name" value="Ribosomal_S12/S23"/>
    <property type="match status" value="1"/>
</dbReference>
<dbReference type="PRINTS" id="PR01034">
    <property type="entry name" value="RIBOSOMALS12"/>
</dbReference>
<dbReference type="SUPFAM" id="SSF50249">
    <property type="entry name" value="Nucleic acid-binding proteins"/>
    <property type="match status" value="1"/>
</dbReference>
<dbReference type="PROSITE" id="PS00055">
    <property type="entry name" value="RIBOSOMAL_S12"/>
    <property type="match status" value="1"/>
</dbReference>
<reference key="1">
    <citation type="journal article" date="2009" name="PLoS ONE">
        <title>Salmonella paratyphi C: genetic divergence from Salmonella choleraesuis and pathogenic convergence with Salmonella typhi.</title>
        <authorList>
            <person name="Liu W.-Q."/>
            <person name="Feng Y."/>
            <person name="Wang Y."/>
            <person name="Zou Q.-H."/>
            <person name="Chen F."/>
            <person name="Guo J.-T."/>
            <person name="Peng Y.-H."/>
            <person name="Jin Y."/>
            <person name="Li Y.-G."/>
            <person name="Hu S.-N."/>
            <person name="Johnston R.N."/>
            <person name="Liu G.-R."/>
            <person name="Liu S.-L."/>
        </authorList>
    </citation>
    <scope>NUCLEOTIDE SEQUENCE [LARGE SCALE GENOMIC DNA]</scope>
    <source>
        <strain>RKS4594</strain>
    </source>
</reference>
<sequence length="124" mass="13737">MATVNQLVRKPRARKVAKSNVPALEACPQKRGVCTRVYTTTPKKPNSALRKVCRVRLTNGFEVTSYIGGEGHNLQEHSVILIRGGRVKDLPGVRYHTVRGALDCSGVKDRKQARSKYGVKRPKA</sequence>
<accession>C0Q0C4</accession>
<protein>
    <recommendedName>
        <fullName evidence="2">Small ribosomal subunit protein uS12</fullName>
    </recommendedName>
    <alternativeName>
        <fullName evidence="3">30S ribosomal protein S12</fullName>
    </alternativeName>
</protein>
<feature type="chain" id="PRO_1000134652" description="Small ribosomal subunit protein uS12">
    <location>
        <begin position="1"/>
        <end position="124"/>
    </location>
</feature>
<feature type="modified residue" description="3-methylthioaspartic acid" evidence="1">
    <location>
        <position position="89"/>
    </location>
</feature>
<comment type="function">
    <text evidence="2">With S4 and S5 plays an important role in translational accuracy.</text>
</comment>
<comment type="function">
    <text evidence="2">Interacts with and stabilizes bases of the 16S rRNA that are involved in tRNA selection in the A site and with the mRNA backbone. Located at the interface of the 30S and 50S subunits, it traverses the body of the 30S subunit contacting proteins on the other side and probably holding the rRNA structure together. The combined cluster of proteins S8, S12 and S17 appears to hold together the shoulder and platform of the 30S subunit.</text>
</comment>
<comment type="subunit">
    <text evidence="2">Part of the 30S ribosomal subunit. Contacts proteins S8 and S17. May interact with IF1 in the 30S initiation complex.</text>
</comment>
<comment type="similarity">
    <text evidence="2">Belongs to the universal ribosomal protein uS12 family.</text>
</comment>
<organism>
    <name type="scientific">Salmonella paratyphi C (strain RKS4594)</name>
    <dbReference type="NCBI Taxonomy" id="476213"/>
    <lineage>
        <taxon>Bacteria</taxon>
        <taxon>Pseudomonadati</taxon>
        <taxon>Pseudomonadota</taxon>
        <taxon>Gammaproteobacteria</taxon>
        <taxon>Enterobacterales</taxon>
        <taxon>Enterobacteriaceae</taxon>
        <taxon>Salmonella</taxon>
    </lineage>
</organism>
<gene>
    <name evidence="2" type="primary">rpsL</name>
    <name type="ordered locus">SPC_3517</name>
</gene>
<name>RS12_SALPC</name>